<organism>
    <name type="scientific">Dictyostelium discoideum</name>
    <name type="common">Social amoeba</name>
    <dbReference type="NCBI Taxonomy" id="44689"/>
    <lineage>
        <taxon>Eukaryota</taxon>
        <taxon>Amoebozoa</taxon>
        <taxon>Evosea</taxon>
        <taxon>Eumycetozoa</taxon>
        <taxon>Dictyostelia</taxon>
        <taxon>Dictyosteliales</taxon>
        <taxon>Dictyosteliaceae</taxon>
        <taxon>Dictyostelium</taxon>
    </lineage>
</organism>
<evidence type="ECO:0000250" key="1"/>
<evidence type="ECO:0000269" key="2">
    <source>
    </source>
</evidence>
<evidence type="ECO:0000305" key="3"/>
<name>HPRT_DICDI</name>
<feature type="chain" id="PRO_0000328334" description="Hypoxanthine-guanine phosphoribosyltransferase">
    <location>
        <begin position="1"/>
        <end position="180"/>
    </location>
</feature>
<feature type="active site" description="Proton acceptor" evidence="1">
    <location>
        <position position="103"/>
    </location>
</feature>
<feature type="binding site" evidence="1">
    <location>
        <position position="40"/>
    </location>
    <ligand>
        <name>GMP</name>
        <dbReference type="ChEBI" id="CHEBI:58115"/>
    </ligand>
</feature>
<feature type="binding site" evidence="1">
    <location>
        <begin position="99"/>
        <end position="107"/>
    </location>
    <ligand>
        <name>GMP</name>
        <dbReference type="ChEBI" id="CHEBI:58115"/>
    </ligand>
</feature>
<feature type="binding site" evidence="1">
    <location>
        <position position="131"/>
    </location>
    <ligand>
        <name>GMP</name>
        <dbReference type="ChEBI" id="CHEBI:58115"/>
    </ligand>
</feature>
<feature type="binding site" evidence="1">
    <location>
        <position position="159"/>
    </location>
    <ligand>
        <name>GMP</name>
        <dbReference type="ChEBI" id="CHEBI:58115"/>
    </ligand>
</feature>
<feature type="binding site" evidence="1">
    <location>
        <position position="159"/>
    </location>
    <ligand>
        <name>Mg(2+)</name>
        <dbReference type="ChEBI" id="CHEBI:18420"/>
    </ligand>
</feature>
<reference key="1">
    <citation type="journal article" date="2005" name="Nature">
        <title>The genome of the social amoeba Dictyostelium discoideum.</title>
        <authorList>
            <person name="Eichinger L."/>
            <person name="Pachebat J.A."/>
            <person name="Gloeckner G."/>
            <person name="Rajandream M.A."/>
            <person name="Sucgang R."/>
            <person name="Berriman M."/>
            <person name="Song J."/>
            <person name="Olsen R."/>
            <person name="Szafranski K."/>
            <person name="Xu Q."/>
            <person name="Tunggal B."/>
            <person name="Kummerfeld S."/>
            <person name="Madera M."/>
            <person name="Konfortov B.A."/>
            <person name="Rivero F."/>
            <person name="Bankier A.T."/>
            <person name="Lehmann R."/>
            <person name="Hamlin N."/>
            <person name="Davies R."/>
            <person name="Gaudet P."/>
            <person name="Fey P."/>
            <person name="Pilcher K."/>
            <person name="Chen G."/>
            <person name="Saunders D."/>
            <person name="Sodergren E.J."/>
            <person name="Davis P."/>
            <person name="Kerhornou A."/>
            <person name="Nie X."/>
            <person name="Hall N."/>
            <person name="Anjard C."/>
            <person name="Hemphill L."/>
            <person name="Bason N."/>
            <person name="Farbrother P."/>
            <person name="Desany B."/>
            <person name="Just E."/>
            <person name="Morio T."/>
            <person name="Rost R."/>
            <person name="Churcher C.M."/>
            <person name="Cooper J."/>
            <person name="Haydock S."/>
            <person name="van Driessche N."/>
            <person name="Cronin A."/>
            <person name="Goodhead I."/>
            <person name="Muzny D.M."/>
            <person name="Mourier T."/>
            <person name="Pain A."/>
            <person name="Lu M."/>
            <person name="Harper D."/>
            <person name="Lindsay R."/>
            <person name="Hauser H."/>
            <person name="James K.D."/>
            <person name="Quiles M."/>
            <person name="Madan Babu M."/>
            <person name="Saito T."/>
            <person name="Buchrieser C."/>
            <person name="Wardroper A."/>
            <person name="Felder M."/>
            <person name="Thangavelu M."/>
            <person name="Johnson D."/>
            <person name="Knights A."/>
            <person name="Loulseged H."/>
            <person name="Mungall K.L."/>
            <person name="Oliver K."/>
            <person name="Price C."/>
            <person name="Quail M.A."/>
            <person name="Urushihara H."/>
            <person name="Hernandez J."/>
            <person name="Rabbinowitsch E."/>
            <person name="Steffen D."/>
            <person name="Sanders M."/>
            <person name="Ma J."/>
            <person name="Kohara Y."/>
            <person name="Sharp S."/>
            <person name="Simmonds M.N."/>
            <person name="Spiegler S."/>
            <person name="Tivey A."/>
            <person name="Sugano S."/>
            <person name="White B."/>
            <person name="Walker D."/>
            <person name="Woodward J.R."/>
            <person name="Winckler T."/>
            <person name="Tanaka Y."/>
            <person name="Shaulsky G."/>
            <person name="Schleicher M."/>
            <person name="Weinstock G.M."/>
            <person name="Rosenthal A."/>
            <person name="Cox E.C."/>
            <person name="Chisholm R.L."/>
            <person name="Gibbs R.A."/>
            <person name="Loomis W.F."/>
            <person name="Platzer M."/>
            <person name="Kay R.R."/>
            <person name="Williams J.G."/>
            <person name="Dear P.H."/>
            <person name="Noegel A.A."/>
            <person name="Barrell B.G."/>
            <person name="Kuspa A."/>
        </authorList>
    </citation>
    <scope>NUCLEOTIDE SEQUENCE [LARGE SCALE GENOMIC DNA]</scope>
    <source>
        <strain>AX4</strain>
    </source>
</reference>
<reference key="2">
    <citation type="journal article" date="1984" name="Anal. Biochem.">
        <title>Intermediary purine-metabolizing enzymes from the cytosol of Dictyostelium discoideum monitored by high-performance liquid chromatography.</title>
        <authorList>
            <person name="Jahngen E.G."/>
            <person name="Rossomando E.F."/>
        </authorList>
    </citation>
    <scope>BIOPHYSICOCHEMICAL PROPERTIES</scope>
</reference>
<gene>
    <name type="primary">hprT</name>
    <name type="ORF">DDB_G0285193</name>
</gene>
<accession>Q54NJ8</accession>
<proteinExistence type="evidence at protein level"/>
<protein>
    <recommendedName>
        <fullName>Hypoxanthine-guanine phosphoribosyltransferase</fullName>
        <shortName>HGPRT</shortName>
        <shortName>HGPRTase</shortName>
        <ecNumber>2.4.2.8</ecNumber>
    </recommendedName>
</protein>
<comment type="function">
    <text evidence="1">Converts guanine to guanosine monophosphate, and hypoxanthine to inosine monophosphate. Transfers the 5-phosphoribosyl group from 5-phosphoribosylpyrophosphate onto the purine. Plays a central role in the generation of purine nucleotides through the purine salvage pathway (By similarity).</text>
</comment>
<comment type="catalytic activity">
    <reaction>
        <text>IMP + diphosphate = hypoxanthine + 5-phospho-alpha-D-ribose 1-diphosphate</text>
        <dbReference type="Rhea" id="RHEA:17973"/>
        <dbReference type="ChEBI" id="CHEBI:17368"/>
        <dbReference type="ChEBI" id="CHEBI:33019"/>
        <dbReference type="ChEBI" id="CHEBI:58017"/>
        <dbReference type="ChEBI" id="CHEBI:58053"/>
        <dbReference type="EC" id="2.4.2.8"/>
    </reaction>
</comment>
<comment type="catalytic activity">
    <reaction>
        <text>GMP + diphosphate = guanine + 5-phospho-alpha-D-ribose 1-diphosphate</text>
        <dbReference type="Rhea" id="RHEA:25424"/>
        <dbReference type="ChEBI" id="CHEBI:16235"/>
        <dbReference type="ChEBI" id="CHEBI:33019"/>
        <dbReference type="ChEBI" id="CHEBI:58017"/>
        <dbReference type="ChEBI" id="CHEBI:58115"/>
        <dbReference type="EC" id="2.4.2.8"/>
    </reaction>
</comment>
<comment type="cofactor">
    <cofactor evidence="1">
        <name>Mg(2+)</name>
        <dbReference type="ChEBI" id="CHEBI:18420"/>
    </cofactor>
    <text evidence="1">Binds 2 magnesium ions per subunit. The magnesium ions are essentially bound to the substrate and have few direct interactions with the protein.</text>
</comment>
<comment type="biophysicochemical properties">
    <kinetics>
        <KM evidence="2">55.5 uM for hypoxanthine</KM>
        <Vmax evidence="2">34.3 nmol/min/mg enzyme</Vmax>
        <text>When guanine is used as the substrate, the rate of nucleotide formation is 50% that with hypoxanthine as the substrate.</text>
    </kinetics>
</comment>
<comment type="pathway">
    <text>Purine metabolism; IMP biosynthesis via salvage pathway; IMP from hypoxanthine: step 1/1.</text>
</comment>
<comment type="subcellular location">
    <subcellularLocation>
        <location evidence="1">Cytoplasm</location>
    </subcellularLocation>
</comment>
<comment type="similarity">
    <text evidence="3">Belongs to the purine/pyrimidine phosphoribosyltransferase family.</text>
</comment>
<keyword id="KW-0963">Cytoplasm</keyword>
<keyword id="KW-0328">Glycosyltransferase</keyword>
<keyword id="KW-0460">Magnesium</keyword>
<keyword id="KW-0479">Metal-binding</keyword>
<keyword id="KW-0547">Nucleotide-binding</keyword>
<keyword id="KW-0660">Purine salvage</keyword>
<keyword id="KW-1185">Reference proteome</keyword>
<keyword id="KW-0808">Transferase</keyword>
<dbReference type="EC" id="2.4.2.8"/>
<dbReference type="EMBL" id="AAFI02000075">
    <property type="protein sequence ID" value="EAL64853.1"/>
    <property type="molecule type" value="Genomic_DNA"/>
</dbReference>
<dbReference type="RefSeq" id="XP_638364.1">
    <property type="nucleotide sequence ID" value="XM_633272.1"/>
</dbReference>
<dbReference type="SMR" id="Q54NJ8"/>
<dbReference type="FunCoup" id="Q54NJ8">
    <property type="interactions" value="209"/>
</dbReference>
<dbReference type="STRING" id="44689.Q54NJ8"/>
<dbReference type="PaxDb" id="44689-DDB0216388"/>
<dbReference type="EnsemblProtists" id="EAL64853">
    <property type="protein sequence ID" value="EAL64853"/>
    <property type="gene ID" value="DDB_G0285193"/>
</dbReference>
<dbReference type="GeneID" id="8624988"/>
<dbReference type="KEGG" id="ddi:DDB_G0285193"/>
<dbReference type="dictyBase" id="DDB_G0285193">
    <property type="gene designation" value="hprT"/>
</dbReference>
<dbReference type="VEuPathDB" id="AmoebaDB:DDB_G0285193"/>
<dbReference type="eggNOG" id="KOG3367">
    <property type="taxonomic scope" value="Eukaryota"/>
</dbReference>
<dbReference type="HOGENOM" id="CLU_073615_0_0_1"/>
<dbReference type="InParanoid" id="Q54NJ8"/>
<dbReference type="OMA" id="VIFMEDI"/>
<dbReference type="PhylomeDB" id="Q54NJ8"/>
<dbReference type="Reactome" id="R-DDI-74217">
    <property type="pathway name" value="Purine salvage"/>
</dbReference>
<dbReference type="Reactome" id="R-DDI-9748787">
    <property type="pathway name" value="Azathioprine ADME"/>
</dbReference>
<dbReference type="UniPathway" id="UPA00591">
    <property type="reaction ID" value="UER00648"/>
</dbReference>
<dbReference type="PRO" id="PR:Q54NJ8"/>
<dbReference type="Proteomes" id="UP000002195">
    <property type="component" value="Chromosome 4"/>
</dbReference>
<dbReference type="GO" id="GO:0005829">
    <property type="term" value="C:cytosol"/>
    <property type="evidence" value="ECO:0000318"/>
    <property type="project" value="GO_Central"/>
</dbReference>
<dbReference type="GO" id="GO:0052657">
    <property type="term" value="F:guanine phosphoribosyltransferase activity"/>
    <property type="evidence" value="ECO:0007669"/>
    <property type="project" value="RHEA"/>
</dbReference>
<dbReference type="GO" id="GO:0004422">
    <property type="term" value="F:hypoxanthine phosphoribosyltransferase activity"/>
    <property type="evidence" value="ECO:0000318"/>
    <property type="project" value="GO_Central"/>
</dbReference>
<dbReference type="GO" id="GO:0000287">
    <property type="term" value="F:magnesium ion binding"/>
    <property type="evidence" value="ECO:0000318"/>
    <property type="project" value="GO_Central"/>
</dbReference>
<dbReference type="GO" id="GO:0000166">
    <property type="term" value="F:nucleotide binding"/>
    <property type="evidence" value="ECO:0007669"/>
    <property type="project" value="UniProtKB-KW"/>
</dbReference>
<dbReference type="GO" id="GO:0032263">
    <property type="term" value="P:GMP salvage"/>
    <property type="evidence" value="ECO:0000318"/>
    <property type="project" value="GO_Central"/>
</dbReference>
<dbReference type="GO" id="GO:0006178">
    <property type="term" value="P:guanine salvage"/>
    <property type="evidence" value="ECO:0000318"/>
    <property type="project" value="GO_Central"/>
</dbReference>
<dbReference type="GO" id="GO:0046100">
    <property type="term" value="P:hypoxanthine metabolic process"/>
    <property type="evidence" value="ECO:0000318"/>
    <property type="project" value="GO_Central"/>
</dbReference>
<dbReference type="GO" id="GO:0032264">
    <property type="term" value="P:IMP salvage"/>
    <property type="evidence" value="ECO:0000318"/>
    <property type="project" value="GO_Central"/>
</dbReference>
<dbReference type="GO" id="GO:0006166">
    <property type="term" value="P:purine ribonucleoside salvage"/>
    <property type="evidence" value="ECO:0007669"/>
    <property type="project" value="UniProtKB-KW"/>
</dbReference>
<dbReference type="CDD" id="cd06223">
    <property type="entry name" value="PRTases_typeI"/>
    <property type="match status" value="1"/>
</dbReference>
<dbReference type="FunFam" id="3.40.50.2020:FF:000006">
    <property type="entry name" value="Hypoxanthine phosphoribosyltransferase"/>
    <property type="match status" value="1"/>
</dbReference>
<dbReference type="Gene3D" id="3.40.50.2020">
    <property type="match status" value="1"/>
</dbReference>
<dbReference type="InterPro" id="IPR050408">
    <property type="entry name" value="HGPRT"/>
</dbReference>
<dbReference type="InterPro" id="IPR005904">
    <property type="entry name" value="Hxn_phspho_trans"/>
</dbReference>
<dbReference type="InterPro" id="IPR000836">
    <property type="entry name" value="PRibTrfase_dom"/>
</dbReference>
<dbReference type="InterPro" id="IPR029057">
    <property type="entry name" value="PRTase-like"/>
</dbReference>
<dbReference type="NCBIfam" id="TIGR01203">
    <property type="entry name" value="HGPRTase"/>
    <property type="match status" value="1"/>
</dbReference>
<dbReference type="PANTHER" id="PTHR43340:SF1">
    <property type="entry name" value="HYPOXANTHINE PHOSPHORIBOSYLTRANSFERASE"/>
    <property type="match status" value="1"/>
</dbReference>
<dbReference type="PANTHER" id="PTHR43340">
    <property type="entry name" value="HYPOXANTHINE-GUANINE PHOSPHORIBOSYLTRANSFERASE"/>
    <property type="match status" value="1"/>
</dbReference>
<dbReference type="Pfam" id="PF00156">
    <property type="entry name" value="Pribosyltran"/>
    <property type="match status" value="1"/>
</dbReference>
<dbReference type="SUPFAM" id="SSF53271">
    <property type="entry name" value="PRTase-like"/>
    <property type="match status" value="1"/>
</dbReference>
<dbReference type="PROSITE" id="PS00103">
    <property type="entry name" value="PUR_PYR_PR_TRANSFER"/>
    <property type="match status" value="1"/>
</dbReference>
<sequence length="180" mass="20536">MSREVIFTEKEIKERVSELGRQITQDYKDSKNLVLVGILKGSFVFMSDLVRSIHLPNTNVSLEFMSISSYGAETSSSGVIRIMMDLRTSIEGKDVLIIEDIVDSGLTLKHLMELLNHRNPNSLHTAVLLRKKEGLKVEVPVKYMGFDIPMVFIIGYGLDFAENYRELPYLGELKEECYKK</sequence>